<accession>P34992</accession>
<dbReference type="EMBL" id="L25416">
    <property type="protein sequence ID" value="AAA49918.1"/>
    <property type="molecule type" value="mRNA"/>
</dbReference>
<dbReference type="PIR" id="S71152">
    <property type="entry name" value="S71152"/>
</dbReference>
<dbReference type="RefSeq" id="NP_001079348.1">
    <property type="nucleotide sequence ID" value="NM_001085879.1"/>
</dbReference>
<dbReference type="SMR" id="P34992"/>
<dbReference type="GlyCosmos" id="P34992">
    <property type="glycosylation" value="4 sites, No reported glycans"/>
</dbReference>
<dbReference type="GeneID" id="378693"/>
<dbReference type="KEGG" id="xla:378693"/>
<dbReference type="AGR" id="Xenbase:XB-GENE-6252364"/>
<dbReference type="CTD" id="378693"/>
<dbReference type="Xenbase" id="XB-GENE-6252364">
    <property type="gene designation" value="npy2r.S"/>
</dbReference>
<dbReference type="OrthoDB" id="9046662at2759"/>
<dbReference type="Proteomes" id="UP000186698">
    <property type="component" value="Chromosome 1S"/>
</dbReference>
<dbReference type="Bgee" id="378693">
    <property type="expression patterns" value="Expressed in brain and 1 other cell type or tissue"/>
</dbReference>
<dbReference type="GO" id="GO:0043005">
    <property type="term" value="C:neuron projection"/>
    <property type="evidence" value="ECO:0000318"/>
    <property type="project" value="GO_Central"/>
</dbReference>
<dbReference type="GO" id="GO:0005886">
    <property type="term" value="C:plasma membrane"/>
    <property type="evidence" value="ECO:0000318"/>
    <property type="project" value="GO_Central"/>
</dbReference>
<dbReference type="GO" id="GO:0042923">
    <property type="term" value="F:neuropeptide binding"/>
    <property type="evidence" value="ECO:0000318"/>
    <property type="project" value="GO_Central"/>
</dbReference>
<dbReference type="GO" id="GO:0008188">
    <property type="term" value="F:neuropeptide receptor activity"/>
    <property type="evidence" value="ECO:0000318"/>
    <property type="project" value="GO_Central"/>
</dbReference>
<dbReference type="GO" id="GO:0004983">
    <property type="term" value="F:neuropeptide Y receptor activity"/>
    <property type="evidence" value="ECO:0007669"/>
    <property type="project" value="InterPro"/>
</dbReference>
<dbReference type="CDD" id="cd15395">
    <property type="entry name" value="7tmA_NPY1R"/>
    <property type="match status" value="1"/>
</dbReference>
<dbReference type="FunFam" id="1.20.1070.10:FF:000062">
    <property type="entry name" value="Neuropeptide Y receptor type 1"/>
    <property type="match status" value="1"/>
</dbReference>
<dbReference type="Gene3D" id="1.20.1070.10">
    <property type="entry name" value="Rhodopsin 7-helix transmembrane proteins"/>
    <property type="match status" value="1"/>
</dbReference>
<dbReference type="InterPro" id="IPR000276">
    <property type="entry name" value="GPCR_Rhodpsn"/>
</dbReference>
<dbReference type="InterPro" id="IPR017452">
    <property type="entry name" value="GPCR_Rhodpsn_7TM"/>
</dbReference>
<dbReference type="InterPro" id="IPR000351">
    <property type="entry name" value="NPY1_rcpt"/>
</dbReference>
<dbReference type="InterPro" id="IPR000611">
    <property type="entry name" value="NPY_rcpt"/>
</dbReference>
<dbReference type="PANTHER" id="PTHR24235">
    <property type="entry name" value="NEUROPEPTIDE Y RECEPTOR"/>
    <property type="match status" value="1"/>
</dbReference>
<dbReference type="PANTHER" id="PTHR24235:SF24">
    <property type="entry name" value="NEUROPEPTIDE Y RECEPTOR TYPE 1"/>
    <property type="match status" value="1"/>
</dbReference>
<dbReference type="Pfam" id="PF00001">
    <property type="entry name" value="7tm_1"/>
    <property type="match status" value="1"/>
</dbReference>
<dbReference type="PRINTS" id="PR00237">
    <property type="entry name" value="GPCRRHODOPSN"/>
</dbReference>
<dbReference type="PRINTS" id="PR01013">
    <property type="entry name" value="NRPEPTIDEY1R"/>
</dbReference>
<dbReference type="PRINTS" id="PR01012">
    <property type="entry name" value="NRPEPTIDEYR"/>
</dbReference>
<dbReference type="SUPFAM" id="SSF81321">
    <property type="entry name" value="Family A G protein-coupled receptor-like"/>
    <property type="match status" value="1"/>
</dbReference>
<dbReference type="PROSITE" id="PS00237">
    <property type="entry name" value="G_PROTEIN_RECEP_F1_1"/>
    <property type="match status" value="1"/>
</dbReference>
<dbReference type="PROSITE" id="PS50262">
    <property type="entry name" value="G_PROTEIN_RECEP_F1_2"/>
    <property type="match status" value="1"/>
</dbReference>
<protein>
    <recommendedName>
        <fullName>Neuropeptide Y receptor type 1</fullName>
        <shortName>NPY1-R</shortName>
    </recommendedName>
</protein>
<proteinExistence type="evidence at transcript level"/>
<keyword id="KW-1003">Cell membrane</keyword>
<keyword id="KW-1015">Disulfide bond</keyword>
<keyword id="KW-0297">G-protein coupled receptor</keyword>
<keyword id="KW-0325">Glycoprotein</keyword>
<keyword id="KW-0449">Lipoprotein</keyword>
<keyword id="KW-0472">Membrane</keyword>
<keyword id="KW-0564">Palmitate</keyword>
<keyword id="KW-0597">Phosphoprotein</keyword>
<keyword id="KW-0675">Receptor</keyword>
<keyword id="KW-1185">Reference proteome</keyword>
<keyword id="KW-0807">Transducer</keyword>
<keyword id="KW-0812">Transmembrane</keyword>
<keyword id="KW-1133">Transmembrane helix</keyword>
<feature type="chain" id="PRO_0000069925" description="Neuropeptide Y receptor type 1">
    <location>
        <begin position="1"/>
        <end position="366"/>
    </location>
</feature>
<feature type="topological domain" description="Extracellular" evidence="2">
    <location>
        <begin position="1"/>
        <end position="39"/>
    </location>
</feature>
<feature type="transmembrane region" description="Helical; Name=1" evidence="2">
    <location>
        <begin position="40"/>
        <end position="60"/>
    </location>
</feature>
<feature type="topological domain" description="Cytoplasmic" evidence="2">
    <location>
        <begin position="61"/>
        <end position="82"/>
    </location>
</feature>
<feature type="transmembrane region" description="Helical; Name=2" evidence="2">
    <location>
        <begin position="83"/>
        <end position="103"/>
    </location>
</feature>
<feature type="topological domain" description="Extracellular" evidence="2">
    <location>
        <begin position="104"/>
        <end position="111"/>
    </location>
</feature>
<feature type="transmembrane region" description="Helical; Name=3" evidence="2">
    <location>
        <begin position="112"/>
        <end position="132"/>
    </location>
</feature>
<feature type="topological domain" description="Cytoplasmic" evidence="2">
    <location>
        <begin position="133"/>
        <end position="149"/>
    </location>
</feature>
<feature type="transmembrane region" description="Helical; Name=4" evidence="2">
    <location>
        <begin position="150"/>
        <end position="170"/>
    </location>
</feature>
<feature type="topological domain" description="Extracellular" evidence="2">
    <location>
        <begin position="171"/>
        <end position="203"/>
    </location>
</feature>
<feature type="transmembrane region" description="Helical; Name=5" evidence="2">
    <location>
        <begin position="204"/>
        <end position="224"/>
    </location>
</feature>
<feature type="topological domain" description="Cytoplasmic" evidence="2">
    <location>
        <begin position="225"/>
        <end position="260"/>
    </location>
</feature>
<feature type="transmembrane region" description="Helical; Name=6" evidence="2">
    <location>
        <begin position="261"/>
        <end position="281"/>
    </location>
</feature>
<feature type="topological domain" description="Extracellular" evidence="2">
    <location>
        <begin position="282"/>
        <end position="294"/>
    </location>
</feature>
<feature type="transmembrane region" description="Helical; Name=7" evidence="2">
    <location>
        <begin position="295"/>
        <end position="315"/>
    </location>
</feature>
<feature type="topological domain" description="Cytoplasmic" evidence="2">
    <location>
        <begin position="316"/>
        <end position="366"/>
    </location>
</feature>
<feature type="lipid moiety-binding region" description="S-palmitoyl cysteine" evidence="1">
    <location>
        <position position="333"/>
    </location>
</feature>
<feature type="glycosylation site" description="N-linked (GlcNAc...) asparagine" evidence="2">
    <location>
        <position position="2"/>
    </location>
</feature>
<feature type="glycosylation site" description="N-linked (GlcNAc...) asparagine" evidence="2">
    <location>
        <position position="9"/>
    </location>
</feature>
<feature type="glycosylation site" description="N-linked (GlcNAc...) asparagine" evidence="2">
    <location>
        <position position="15"/>
    </location>
</feature>
<feature type="glycosylation site" description="N-linked (GlcNAc...) asparagine" evidence="2">
    <location>
        <position position="181"/>
    </location>
</feature>
<feature type="disulfide bond" evidence="3">
    <location>
        <begin position="108"/>
        <end position="193"/>
    </location>
</feature>
<organism>
    <name type="scientific">Xenopus laevis</name>
    <name type="common">African clawed frog</name>
    <dbReference type="NCBI Taxonomy" id="8355"/>
    <lineage>
        <taxon>Eukaryota</taxon>
        <taxon>Metazoa</taxon>
        <taxon>Chordata</taxon>
        <taxon>Craniata</taxon>
        <taxon>Vertebrata</taxon>
        <taxon>Euteleostomi</taxon>
        <taxon>Amphibia</taxon>
        <taxon>Batrachia</taxon>
        <taxon>Anura</taxon>
        <taxon>Pipoidea</taxon>
        <taxon>Pipidae</taxon>
        <taxon>Xenopodinae</taxon>
        <taxon>Xenopus</taxon>
        <taxon>Xenopus</taxon>
    </lineage>
</organism>
<reference key="1">
    <citation type="journal article" date="1995" name="Biochim. Biophys. Acta">
        <title>Cloning and sequence analysis of a neuropeptide Y/peptide YY receptor Y1 cDNA from Xenopus laevis.</title>
        <authorList>
            <person name="Blomqvist A.G."/>
            <person name="Roubos E.W."/>
            <person name="Larhammar D."/>
            <person name="Martens G.J.M."/>
        </authorList>
    </citation>
    <scope>NUCLEOTIDE SEQUENCE [MRNA]</scope>
    <source>
        <tissue>Hypothalamus</tissue>
    </source>
</reference>
<sequence length="366" mass="42253">MNFSTYFENLSVPNNISGNITFPISEDCALPLPMIFTLALAYGAVIILGLSGNLALIIIILKQKEMRNVTNILIVNLSFSDLLATIMCLPFTLIYTLMDHWIFGEVMCKLNEYIQCVSVTVSIFSLVLIAIERHQLIINPRGWRPNNRHACFGITVIWGFAMACSTPLMMYSVLTDEPFKNISLDSYIGKYVCLEDFPEDKFRLSYTTLLFILQYLGPLCFIFVCYTKIFLRLKRRNNMMDKIRDNKYRSSETKRINIMLLSIVVGFALCWLPFFIFNLVFDWNHEAVATCNHNLLFLICHLTAMISTCVNPIFYGFLNKNFQRDLQFFFNFCDFRSREDDYETIAMSTMHTDVSKTSLKQASPIA</sequence>
<name>NPY1R_XENLA</name>
<comment type="function">
    <text>Receptor for neuropeptide Y and peptide YY.</text>
</comment>
<comment type="subcellular location">
    <subcellularLocation>
        <location>Cell membrane</location>
        <topology>Multi-pass membrane protein</topology>
    </subcellularLocation>
</comment>
<comment type="similarity">
    <text evidence="3">Belongs to the G-protein coupled receptor 1 family.</text>
</comment>
<evidence type="ECO:0000250" key="1"/>
<evidence type="ECO:0000255" key="2"/>
<evidence type="ECO:0000255" key="3">
    <source>
        <dbReference type="PROSITE-ProRule" id="PRU00521"/>
    </source>
</evidence>
<gene>
    <name type="primary">npy1r</name>
</gene>